<sequence length="294" mass="32838">MASSREIRNKIKSIKNTQKITRAMEMVAASKMRKAQDRMKKARPYGEKIRNVAAHMSKASVEYRHPFLIDRNSVKRVGIIVVTSDKGLCGGLNTNVLRRALNEIRVWGAEGEQIEVCCIGNKGLGFMSRLGVRVISQVTGLGDAPNMEKLIGAVKVVLDAYTDDHFDRVYIFYNRFVNTMKQIPVMEQLLPLTDEHMRDDGNEAKPARAPWDYIYEPEAKPVIDDIMIRYIEALVYQAVAENMASEQSARMVAMKAASDNAGNLIDELTLIYNKSRQAAITKELSEIVGGAAAV</sequence>
<feature type="chain" id="PRO_1000053266" description="ATP synthase gamma chain">
    <location>
        <begin position="1"/>
        <end position="294"/>
    </location>
</feature>
<protein>
    <recommendedName>
        <fullName evidence="1">ATP synthase gamma chain</fullName>
    </recommendedName>
    <alternativeName>
        <fullName evidence="1">ATP synthase F1 sector gamma subunit</fullName>
    </alternativeName>
    <alternativeName>
        <fullName evidence="1">F-ATPase gamma subunit</fullName>
    </alternativeName>
</protein>
<organism>
    <name type="scientific">Nitrosomonas eutropha (strain DSM 101675 / C91 / Nm57)</name>
    <dbReference type="NCBI Taxonomy" id="335283"/>
    <lineage>
        <taxon>Bacteria</taxon>
        <taxon>Pseudomonadati</taxon>
        <taxon>Pseudomonadota</taxon>
        <taxon>Betaproteobacteria</taxon>
        <taxon>Nitrosomonadales</taxon>
        <taxon>Nitrosomonadaceae</taxon>
        <taxon>Nitrosomonas</taxon>
    </lineage>
</organism>
<evidence type="ECO:0000255" key="1">
    <source>
        <dbReference type="HAMAP-Rule" id="MF_00815"/>
    </source>
</evidence>
<proteinExistence type="inferred from homology"/>
<comment type="function">
    <text evidence="1">Produces ATP from ADP in the presence of a proton gradient across the membrane. The gamma chain is believed to be important in regulating ATPase activity and the flow of protons through the CF(0) complex.</text>
</comment>
<comment type="subunit">
    <text evidence="1">F-type ATPases have 2 components, CF(1) - the catalytic core - and CF(0) - the membrane proton channel. CF(1) has five subunits: alpha(3), beta(3), gamma(1), delta(1), epsilon(1). CF(0) has three main subunits: a, b and c.</text>
</comment>
<comment type="subcellular location">
    <subcellularLocation>
        <location evidence="1">Cell inner membrane</location>
        <topology evidence="1">Peripheral membrane protein</topology>
    </subcellularLocation>
</comment>
<comment type="similarity">
    <text evidence="1">Belongs to the ATPase gamma chain family.</text>
</comment>
<name>ATPG_NITEC</name>
<gene>
    <name evidence="1" type="primary">atpG</name>
    <name type="ordered locus">Neut_0276</name>
</gene>
<reference key="1">
    <citation type="journal article" date="2007" name="Environ. Microbiol.">
        <title>Whole-genome analysis of the ammonia-oxidizing bacterium, Nitrosomonas eutropha C91: implications for niche adaptation.</title>
        <authorList>
            <person name="Stein L.Y."/>
            <person name="Arp D.J."/>
            <person name="Berube P.M."/>
            <person name="Chain P.S."/>
            <person name="Hauser L."/>
            <person name="Jetten M.S."/>
            <person name="Klotz M.G."/>
            <person name="Larimer F.W."/>
            <person name="Norton J.M."/>
            <person name="Op den Camp H.J.M."/>
            <person name="Shin M."/>
            <person name="Wei X."/>
        </authorList>
    </citation>
    <scope>NUCLEOTIDE SEQUENCE [LARGE SCALE GENOMIC DNA]</scope>
    <source>
        <strain>DSM 101675 / C91 / Nm57</strain>
    </source>
</reference>
<keyword id="KW-0066">ATP synthesis</keyword>
<keyword id="KW-0997">Cell inner membrane</keyword>
<keyword id="KW-1003">Cell membrane</keyword>
<keyword id="KW-0139">CF(1)</keyword>
<keyword id="KW-0375">Hydrogen ion transport</keyword>
<keyword id="KW-0406">Ion transport</keyword>
<keyword id="KW-0472">Membrane</keyword>
<keyword id="KW-0813">Transport</keyword>
<dbReference type="EMBL" id="CP000450">
    <property type="protein sequence ID" value="ABI58560.1"/>
    <property type="molecule type" value="Genomic_DNA"/>
</dbReference>
<dbReference type="RefSeq" id="WP_011633404.1">
    <property type="nucleotide sequence ID" value="NC_008344.1"/>
</dbReference>
<dbReference type="SMR" id="Q0AJB1"/>
<dbReference type="STRING" id="335283.Neut_0276"/>
<dbReference type="KEGG" id="net:Neut_0276"/>
<dbReference type="eggNOG" id="COG0224">
    <property type="taxonomic scope" value="Bacteria"/>
</dbReference>
<dbReference type="HOGENOM" id="CLU_050669_0_1_4"/>
<dbReference type="OrthoDB" id="9812769at2"/>
<dbReference type="Proteomes" id="UP000001966">
    <property type="component" value="Chromosome"/>
</dbReference>
<dbReference type="GO" id="GO:0005886">
    <property type="term" value="C:plasma membrane"/>
    <property type="evidence" value="ECO:0007669"/>
    <property type="project" value="UniProtKB-SubCell"/>
</dbReference>
<dbReference type="GO" id="GO:0045259">
    <property type="term" value="C:proton-transporting ATP synthase complex"/>
    <property type="evidence" value="ECO:0007669"/>
    <property type="project" value="UniProtKB-KW"/>
</dbReference>
<dbReference type="GO" id="GO:0005524">
    <property type="term" value="F:ATP binding"/>
    <property type="evidence" value="ECO:0007669"/>
    <property type="project" value="UniProtKB-UniRule"/>
</dbReference>
<dbReference type="GO" id="GO:0046933">
    <property type="term" value="F:proton-transporting ATP synthase activity, rotational mechanism"/>
    <property type="evidence" value="ECO:0007669"/>
    <property type="project" value="UniProtKB-UniRule"/>
</dbReference>
<dbReference type="GO" id="GO:0042777">
    <property type="term" value="P:proton motive force-driven plasma membrane ATP synthesis"/>
    <property type="evidence" value="ECO:0007669"/>
    <property type="project" value="UniProtKB-UniRule"/>
</dbReference>
<dbReference type="CDD" id="cd12151">
    <property type="entry name" value="F1-ATPase_gamma"/>
    <property type="match status" value="1"/>
</dbReference>
<dbReference type="FunFam" id="1.10.287.80:FF:000005">
    <property type="entry name" value="ATP synthase gamma chain"/>
    <property type="match status" value="1"/>
</dbReference>
<dbReference type="FunFam" id="3.40.1380.10:FF:000006">
    <property type="entry name" value="ATP synthase gamma chain"/>
    <property type="match status" value="1"/>
</dbReference>
<dbReference type="Gene3D" id="3.40.1380.10">
    <property type="match status" value="1"/>
</dbReference>
<dbReference type="Gene3D" id="1.10.287.80">
    <property type="entry name" value="ATP synthase, gamma subunit, helix hairpin domain"/>
    <property type="match status" value="2"/>
</dbReference>
<dbReference type="HAMAP" id="MF_00815">
    <property type="entry name" value="ATP_synth_gamma_bact"/>
    <property type="match status" value="1"/>
</dbReference>
<dbReference type="InterPro" id="IPR035968">
    <property type="entry name" value="ATP_synth_F1_ATPase_gsu"/>
</dbReference>
<dbReference type="InterPro" id="IPR000131">
    <property type="entry name" value="ATP_synth_F1_gsu"/>
</dbReference>
<dbReference type="InterPro" id="IPR023632">
    <property type="entry name" value="ATP_synth_F1_gsu_CS"/>
</dbReference>
<dbReference type="NCBIfam" id="TIGR01146">
    <property type="entry name" value="ATPsyn_F1gamma"/>
    <property type="match status" value="1"/>
</dbReference>
<dbReference type="NCBIfam" id="NF004144">
    <property type="entry name" value="PRK05621.1-1"/>
    <property type="match status" value="1"/>
</dbReference>
<dbReference type="PANTHER" id="PTHR11693">
    <property type="entry name" value="ATP SYNTHASE GAMMA CHAIN"/>
    <property type="match status" value="1"/>
</dbReference>
<dbReference type="PANTHER" id="PTHR11693:SF22">
    <property type="entry name" value="ATP SYNTHASE SUBUNIT GAMMA, MITOCHONDRIAL"/>
    <property type="match status" value="1"/>
</dbReference>
<dbReference type="Pfam" id="PF00231">
    <property type="entry name" value="ATP-synt"/>
    <property type="match status" value="1"/>
</dbReference>
<dbReference type="PRINTS" id="PR00126">
    <property type="entry name" value="ATPASEGAMMA"/>
</dbReference>
<dbReference type="SUPFAM" id="SSF52943">
    <property type="entry name" value="ATP synthase (F1-ATPase), gamma subunit"/>
    <property type="match status" value="1"/>
</dbReference>
<dbReference type="PROSITE" id="PS00153">
    <property type="entry name" value="ATPASE_GAMMA"/>
    <property type="match status" value="1"/>
</dbReference>
<accession>Q0AJB1</accession>